<organismHost>
    <name type="scientific">Brassica campestris</name>
    <name type="common">Field mustard</name>
    <dbReference type="NCBI Taxonomy" id="3711"/>
</organismHost>
<organismHost>
    <name type="scientific">Solanum tuberosum</name>
    <name type="common">Potato</name>
    <dbReference type="NCBI Taxonomy" id="4113"/>
</organismHost>
<organism>
    <name type="scientific">Potato virus X (strain HB)</name>
    <name type="common">PVX</name>
    <dbReference type="NCBI Taxonomy" id="73488"/>
    <lineage>
        <taxon>Viruses</taxon>
        <taxon>Riboviria</taxon>
        <taxon>Orthornavirae</taxon>
        <taxon>Kitrinoviricota</taxon>
        <taxon>Alsuviricetes</taxon>
        <taxon>Tymovirales</taxon>
        <taxon>Alphaflexiviridae</taxon>
        <taxon>Potexvirus</taxon>
        <taxon>Potato virus X</taxon>
    </lineage>
</organism>
<dbReference type="EMBL" id="X72214">
    <property type="protein sequence ID" value="CAA51013.1"/>
    <property type="molecule type" value="Genomic_RNA"/>
</dbReference>
<dbReference type="PIR" id="JQ2295">
    <property type="entry name" value="JQ2295"/>
</dbReference>
<dbReference type="Proteomes" id="UP000006842">
    <property type="component" value="Genome"/>
</dbReference>
<dbReference type="GO" id="GO:0030430">
    <property type="term" value="C:host cell cytoplasm"/>
    <property type="evidence" value="ECO:0007669"/>
    <property type="project" value="UniProtKB-SubCell"/>
</dbReference>
<dbReference type="GO" id="GO:0005524">
    <property type="term" value="F:ATP binding"/>
    <property type="evidence" value="ECO:0007669"/>
    <property type="project" value="InterPro"/>
</dbReference>
<dbReference type="GO" id="GO:0003723">
    <property type="term" value="F:RNA binding"/>
    <property type="evidence" value="ECO:0007669"/>
    <property type="project" value="UniProtKB-KW"/>
</dbReference>
<dbReference type="GO" id="GO:0052170">
    <property type="term" value="P:symbiont-mediated suppression of host innate immune response"/>
    <property type="evidence" value="ECO:0007669"/>
    <property type="project" value="UniProtKB-KW"/>
</dbReference>
<dbReference type="GO" id="GO:0046740">
    <property type="term" value="P:transport of virus in host, cell to cell"/>
    <property type="evidence" value="ECO:0007669"/>
    <property type="project" value="UniProtKB-KW"/>
</dbReference>
<dbReference type="InterPro" id="IPR027351">
    <property type="entry name" value="(+)RNA_virus_helicase_core_dom"/>
</dbReference>
<dbReference type="Pfam" id="PF01443">
    <property type="entry name" value="Viral_helicase1"/>
    <property type="match status" value="1"/>
</dbReference>
<dbReference type="PROSITE" id="PS51657">
    <property type="entry name" value="PSRV_HELICASE"/>
    <property type="match status" value="1"/>
</dbReference>
<protein>
    <recommendedName>
        <fullName>Movement and silencing protein TGBp1</fullName>
    </recommendedName>
    <alternativeName>
        <fullName>25 kDa protein</fullName>
    </alternativeName>
    <alternativeName>
        <fullName>Silencing suppressor P25</fullName>
    </alternativeName>
    <alternativeName>
        <fullName>Triple gene block 1 protein</fullName>
        <shortName>TGBp1</shortName>
    </alternativeName>
</protein>
<accession>Q07632</accession>
<sequence>MDILIISLKSLGYSRTSRPLDSGPLVVHAVAGAGKSTALRKLLARHSTFTIHTLGVPDKISIRTRGIQKPGPIPKGNFAILDEYTLDATTREAYQALFADPYQAPELSLEPHFYLETSFRTPKKAAALIASCGFDFETNSQEEGHLEVTGIFKGPLLGKVIAIDSEAETTLSRHGVEFVKPCQVTGLEFPVVTIVSAAPIEEIGQSTLFYNAITRSKGLTYVRAGT</sequence>
<keyword id="KW-1035">Host cytoplasm</keyword>
<keyword id="KW-0945">Host-virus interaction</keyword>
<keyword id="KW-1090">Inhibition of host innate immune response by virus</keyword>
<keyword id="KW-0694">RNA-binding</keyword>
<keyword id="KW-0941">Suppressor of RNA silencing</keyword>
<keyword id="KW-0813">Transport</keyword>
<keyword id="KW-0899">Viral immunoevasion</keyword>
<keyword id="KW-0916">Viral movement protein</keyword>
<gene>
    <name type="ORF">ORF2</name>
</gene>
<evidence type="ECO:0000250" key="1"/>
<evidence type="ECO:0000305" key="2"/>
<proteinExistence type="inferred from homology"/>
<comment type="function">
    <text evidence="1">Transports viral genome to neighboring plant cells directly through plasmosdesmata, without any budding. The movement protein allows efficient cell to cell propagation, by bypassing the host cell wall barrier. Increases plasmodesma size exclusion limit. Acts as a suppressor of RNA-mediated gene silencing, also known as post-transcriptional gene silencing (PTGS), a mechanism of plant viral defense that limits the accumulation of viral RNAs (By similarity).</text>
</comment>
<comment type="subunit">
    <text evidence="1">Homodimer and homooligomer. Interacts with capsid protein. Interacts with host AGO1; this interaction targets the host protein for degradation, thereby suppressing the antiviral RNA silencing (By similarity).</text>
</comment>
<comment type="subcellular location">
    <subcellularLocation>
        <location evidence="1">Host cytoplasm</location>
    </subcellularLocation>
</comment>
<comment type="miscellaneous">
    <text>TGBp1, TGBp2 and TGBp3 seem to act together for cell-to-cell propagation. TGBp1 is the main movement protein that physically cross the plasmodesma with the viral genome. TGBp2 and TGBp3 would facilitate TGBp1 function.</text>
</comment>
<comment type="similarity">
    <text evidence="2">Belongs to the Tymovirales TGBp1 protein family.</text>
</comment>
<feature type="chain" id="PRO_0000222572" description="Movement and silencing protein TGBp1">
    <location>
        <begin position="1"/>
        <end position="226"/>
    </location>
</feature>
<feature type="domain" description="(+)RNA virus helicase ATP-binding">
    <location>
        <begin position="1"/>
        <end position="138"/>
    </location>
</feature>
<feature type="domain" description="(+)RNA virus helicase C-terminal">
    <location>
        <begin position="139"/>
        <end position="226"/>
    </location>
</feature>
<reference key="1">
    <citation type="journal article" date="1993" name="J. Gen. Virol.">
        <title>RNA sequence of potato virus X strain HB.</title>
        <authorList>
            <person name="Querci M."/>
            <person name="van der Vlugt R."/>
            <person name="Goldbach R."/>
            <person name="Salazar L.F."/>
        </authorList>
    </citation>
    <scope>NUCLEOTIDE SEQUENCE [GENOMIC RNA]</scope>
</reference>
<reference key="2">
    <citation type="journal article" date="2005" name="Mol. Plant Microbe Interact.">
        <title>A new cell-to-cell transport model for Potexviruses.</title>
        <authorList>
            <person name="Verchot-Lubicz J."/>
        </authorList>
    </citation>
    <scope>REVIEW</scope>
</reference>
<name>TGB1_PVXHB</name>